<proteinExistence type="inferred from homology"/>
<reference key="1">
    <citation type="journal article" date="1998" name="J. Bacteriol.">
        <title>Transformation of Rickettsia prowazekii to rifampin resistance.</title>
        <authorList>
            <person name="Rachek L.I."/>
            <person name="Tucker A.M."/>
            <person name="Winkler H.H."/>
            <person name="Wood D.O."/>
        </authorList>
    </citation>
    <scope>NUCLEOTIDE SEQUENCE [GENOMIC DNA]</scope>
    <source>
        <strain>Madrid E</strain>
    </source>
</reference>
<reference key="2">
    <citation type="journal article" date="1998" name="Nature">
        <title>The genome sequence of Rickettsia prowazekii and the origin of mitochondria.</title>
        <authorList>
            <person name="Andersson S.G.E."/>
            <person name="Zomorodipour A."/>
            <person name="Andersson J.O."/>
            <person name="Sicheritz-Ponten T."/>
            <person name="Alsmark U.C.M."/>
            <person name="Podowski R.M."/>
            <person name="Naeslund A.K."/>
            <person name="Eriksson A.-S."/>
            <person name="Winkler H.H."/>
            <person name="Kurland C.G."/>
        </authorList>
    </citation>
    <scope>NUCLEOTIDE SEQUENCE [LARGE SCALE GENOMIC DNA]</scope>
    <source>
        <strain>Madrid E</strain>
    </source>
</reference>
<reference key="3">
    <citation type="journal article" date="1999" name="Antimicrob. Agents Chemother.">
        <title>Characterization of mutations in the rpoB gene in naturally rifampin-resistant Rickettsia species.</title>
        <authorList>
            <person name="Drancourt M."/>
            <person name="Raoult D."/>
        </authorList>
    </citation>
    <scope>NUCLEOTIDE SEQUENCE [GENOMIC DNA]</scope>
    <source>
        <strain>ATCC VR-142 / Breinl</strain>
    </source>
</reference>
<comment type="function">
    <text>DNA-dependent RNA polymerase catalyzes the transcription of DNA into RNA using the four ribonucleoside triphosphates as substrates.</text>
</comment>
<comment type="catalytic activity">
    <reaction evidence="1">
        <text>RNA(n) + a ribonucleoside 5'-triphosphate = RNA(n+1) + diphosphate</text>
        <dbReference type="Rhea" id="RHEA:21248"/>
        <dbReference type="Rhea" id="RHEA-COMP:14527"/>
        <dbReference type="Rhea" id="RHEA-COMP:17342"/>
        <dbReference type="ChEBI" id="CHEBI:33019"/>
        <dbReference type="ChEBI" id="CHEBI:61557"/>
        <dbReference type="ChEBI" id="CHEBI:140395"/>
        <dbReference type="EC" id="2.7.7.6"/>
    </reaction>
</comment>
<comment type="subunit">
    <text evidence="1">The RNAP catalytic core consists of 2 alpha, 1 beta, 1 beta' and 1 omega subunit. When a sigma factor is associated with the core the holoenzyme is formed, which can initiate transcription.</text>
</comment>
<comment type="similarity">
    <text evidence="1">Belongs to the RNA polymerase beta chain family.</text>
</comment>
<evidence type="ECO:0000255" key="1">
    <source>
        <dbReference type="HAMAP-Rule" id="MF_01321"/>
    </source>
</evidence>
<protein>
    <recommendedName>
        <fullName evidence="1">DNA-directed RNA polymerase subunit beta</fullName>
        <shortName evidence="1">RNAP subunit beta</shortName>
        <ecNumber evidence="1">2.7.7.6</ecNumber>
    </recommendedName>
    <alternativeName>
        <fullName evidence="1">RNA polymerase subunit beta</fullName>
    </alternativeName>
    <alternativeName>
        <fullName evidence="1">Transcriptase subunit beta</fullName>
    </alternativeName>
</protein>
<keyword id="KW-0046">Antibiotic resistance</keyword>
<keyword id="KW-0240">DNA-directed RNA polymerase</keyword>
<keyword id="KW-0548">Nucleotidyltransferase</keyword>
<keyword id="KW-1185">Reference proteome</keyword>
<keyword id="KW-0804">Transcription</keyword>
<keyword id="KW-0808">Transferase</keyword>
<gene>
    <name evidence="1" type="primary">rpoB</name>
    <name type="ordered locus">RP140</name>
</gene>
<dbReference type="EC" id="2.7.7.6" evidence="1"/>
<dbReference type="EMBL" id="AF034531">
    <property type="protein sequence ID" value="AAC38354.1"/>
    <property type="molecule type" value="Genomic_DNA"/>
</dbReference>
<dbReference type="EMBL" id="AJ235270">
    <property type="protein sequence ID" value="CAA14608.1"/>
    <property type="molecule type" value="Genomic_DNA"/>
</dbReference>
<dbReference type="EMBL" id="AF076437">
    <property type="protein sequence ID" value="AAF22439.1"/>
    <property type="molecule type" value="Genomic_DNA"/>
</dbReference>
<dbReference type="PIR" id="A71724">
    <property type="entry name" value="A71724"/>
</dbReference>
<dbReference type="RefSeq" id="NP_220531.1">
    <property type="nucleotide sequence ID" value="NC_000963.1"/>
</dbReference>
<dbReference type="RefSeq" id="WP_010886216.1">
    <property type="nucleotide sequence ID" value="NC_000963.1"/>
</dbReference>
<dbReference type="SMR" id="O52271"/>
<dbReference type="STRING" id="272947.gene:17555223"/>
<dbReference type="EnsemblBacteria" id="CAA14608">
    <property type="protein sequence ID" value="CAA14608"/>
    <property type="gene ID" value="CAA14608"/>
</dbReference>
<dbReference type="GeneID" id="57569268"/>
<dbReference type="KEGG" id="rpr:RP140"/>
<dbReference type="PATRIC" id="fig|272947.5.peg.142"/>
<dbReference type="eggNOG" id="COG0085">
    <property type="taxonomic scope" value="Bacteria"/>
</dbReference>
<dbReference type="HOGENOM" id="CLU_000524_4_0_5"/>
<dbReference type="OrthoDB" id="9803954at2"/>
<dbReference type="Proteomes" id="UP000002480">
    <property type="component" value="Chromosome"/>
</dbReference>
<dbReference type="GO" id="GO:0000428">
    <property type="term" value="C:DNA-directed RNA polymerase complex"/>
    <property type="evidence" value="ECO:0007669"/>
    <property type="project" value="UniProtKB-KW"/>
</dbReference>
<dbReference type="GO" id="GO:0003677">
    <property type="term" value="F:DNA binding"/>
    <property type="evidence" value="ECO:0007669"/>
    <property type="project" value="UniProtKB-UniRule"/>
</dbReference>
<dbReference type="GO" id="GO:0003899">
    <property type="term" value="F:DNA-directed RNA polymerase activity"/>
    <property type="evidence" value="ECO:0007669"/>
    <property type="project" value="UniProtKB-UniRule"/>
</dbReference>
<dbReference type="GO" id="GO:0032549">
    <property type="term" value="F:ribonucleoside binding"/>
    <property type="evidence" value="ECO:0007669"/>
    <property type="project" value="InterPro"/>
</dbReference>
<dbReference type="GO" id="GO:0006351">
    <property type="term" value="P:DNA-templated transcription"/>
    <property type="evidence" value="ECO:0007669"/>
    <property type="project" value="UniProtKB-UniRule"/>
</dbReference>
<dbReference type="GO" id="GO:0046677">
    <property type="term" value="P:response to antibiotic"/>
    <property type="evidence" value="ECO:0007669"/>
    <property type="project" value="UniProtKB-KW"/>
</dbReference>
<dbReference type="CDD" id="cd00653">
    <property type="entry name" value="RNA_pol_B_RPB2"/>
    <property type="match status" value="1"/>
</dbReference>
<dbReference type="Gene3D" id="2.40.50.100">
    <property type="match status" value="1"/>
</dbReference>
<dbReference type="Gene3D" id="2.40.50.150">
    <property type="match status" value="1"/>
</dbReference>
<dbReference type="Gene3D" id="3.90.1100.10">
    <property type="match status" value="2"/>
</dbReference>
<dbReference type="Gene3D" id="2.30.150.10">
    <property type="entry name" value="DNA-directed RNA polymerase, beta subunit, external 1 domain"/>
    <property type="match status" value="1"/>
</dbReference>
<dbReference type="Gene3D" id="2.40.270.10">
    <property type="entry name" value="DNA-directed RNA polymerase, subunit 2, domain 6"/>
    <property type="match status" value="1"/>
</dbReference>
<dbReference type="Gene3D" id="3.90.1800.10">
    <property type="entry name" value="RNA polymerase alpha subunit dimerisation domain"/>
    <property type="match status" value="1"/>
</dbReference>
<dbReference type="Gene3D" id="3.90.1110.10">
    <property type="entry name" value="RNA polymerase Rpb2, domain 2"/>
    <property type="match status" value="1"/>
</dbReference>
<dbReference type="HAMAP" id="MF_01321">
    <property type="entry name" value="RNApol_bact_RpoB"/>
    <property type="match status" value="1"/>
</dbReference>
<dbReference type="InterPro" id="IPR042107">
    <property type="entry name" value="DNA-dir_RNA_pol_bsu_ext_1_sf"/>
</dbReference>
<dbReference type="InterPro" id="IPR019462">
    <property type="entry name" value="DNA-dir_RNA_pol_bsu_external_1"/>
</dbReference>
<dbReference type="InterPro" id="IPR015712">
    <property type="entry name" value="DNA-dir_RNA_pol_su2"/>
</dbReference>
<dbReference type="InterPro" id="IPR007120">
    <property type="entry name" value="DNA-dir_RNAP_su2_dom"/>
</dbReference>
<dbReference type="InterPro" id="IPR037033">
    <property type="entry name" value="DNA-dir_RNAP_su2_hyb_sf"/>
</dbReference>
<dbReference type="InterPro" id="IPR010243">
    <property type="entry name" value="RNA_pol_bsu_bac"/>
</dbReference>
<dbReference type="InterPro" id="IPR007121">
    <property type="entry name" value="RNA_pol_bsu_CS"/>
</dbReference>
<dbReference type="InterPro" id="IPR007644">
    <property type="entry name" value="RNA_pol_bsu_protrusion"/>
</dbReference>
<dbReference type="InterPro" id="IPR007642">
    <property type="entry name" value="RNA_pol_Rpb2_2"/>
</dbReference>
<dbReference type="InterPro" id="IPR037034">
    <property type="entry name" value="RNA_pol_Rpb2_2_sf"/>
</dbReference>
<dbReference type="InterPro" id="IPR007645">
    <property type="entry name" value="RNA_pol_Rpb2_3"/>
</dbReference>
<dbReference type="InterPro" id="IPR007641">
    <property type="entry name" value="RNA_pol_Rpb2_7"/>
</dbReference>
<dbReference type="InterPro" id="IPR014724">
    <property type="entry name" value="RNA_pol_RPB2_OB-fold"/>
</dbReference>
<dbReference type="NCBIfam" id="NF001616">
    <property type="entry name" value="PRK00405.1"/>
    <property type="match status" value="1"/>
</dbReference>
<dbReference type="NCBIfam" id="TIGR02013">
    <property type="entry name" value="rpoB"/>
    <property type="match status" value="1"/>
</dbReference>
<dbReference type="PANTHER" id="PTHR20856">
    <property type="entry name" value="DNA-DIRECTED RNA POLYMERASE I SUBUNIT 2"/>
    <property type="match status" value="1"/>
</dbReference>
<dbReference type="Pfam" id="PF04563">
    <property type="entry name" value="RNA_pol_Rpb2_1"/>
    <property type="match status" value="1"/>
</dbReference>
<dbReference type="Pfam" id="PF04561">
    <property type="entry name" value="RNA_pol_Rpb2_2"/>
    <property type="match status" value="2"/>
</dbReference>
<dbReference type="Pfam" id="PF04565">
    <property type="entry name" value="RNA_pol_Rpb2_3"/>
    <property type="match status" value="1"/>
</dbReference>
<dbReference type="Pfam" id="PF10385">
    <property type="entry name" value="RNA_pol_Rpb2_45"/>
    <property type="match status" value="1"/>
</dbReference>
<dbReference type="Pfam" id="PF00562">
    <property type="entry name" value="RNA_pol_Rpb2_6"/>
    <property type="match status" value="1"/>
</dbReference>
<dbReference type="Pfam" id="PF04560">
    <property type="entry name" value="RNA_pol_Rpb2_7"/>
    <property type="match status" value="1"/>
</dbReference>
<dbReference type="SUPFAM" id="SSF64484">
    <property type="entry name" value="beta and beta-prime subunits of DNA dependent RNA-polymerase"/>
    <property type="match status" value="1"/>
</dbReference>
<dbReference type="PROSITE" id="PS01166">
    <property type="entry name" value="RNA_POL_BETA"/>
    <property type="match status" value="1"/>
</dbReference>
<accession>O52271</accession>
<accession>Q9RH37</accession>
<sequence length="1374" mass="154583">MVSLRDNIESQPLSHNRRIRKNFGHINLVADIPNLIEIQKNSYEKNFLQLNIKDSERKNKGLQSILNSIFPISDSSNIANLEFVKYEFDTPKYDVDECSQRSLSYAAPLKVTLRLSIWDIDEDTGTREIKGIKEQEVYMGDIPLMTKNGTFIINGTERVVVSQMHRSPGVFFYHDEGKVHSSGKLLYSARVIPYRGSWLDFEFDAKDIIYFRIDRKRKLYATTLLRAIGMSTEEIIKFYYNSVTYKFVKNKGWSVKFIPQHITAHRLTSDLVDADTGNVLLKAGQKITPRLAQKYFGVGLNNILVTHETLIGKYLSEDLRDPASDEVLAKIGEMITSDMLKVINDLKIKNVNVLVINPQSGSYIRNTLFADKNQDREAALCDIFRVLRPGEPANIEAAESLFYNLFFDAERYDLSEVGRIKMNSRLELNISEEVTVLTIDDIKNIVRILVELKDGKGIIDDIDHLGNRRVRSVGELIENQFRIGLVRMEKSVIERMSAGDVDTVMPHDLVNSKILVSVVKEFFSTSQLSQFMDQTNPLSEITHKRRLSALGPGGLSRDRAGFEVRDVHPTHYGRICPIETPEGQNIGLINSMATYARINKHGFIESPYRRVKNGYVTDEVVYLSAIEEGKYKIGQANSKVDQDGKLQGEFINCRVEGGNFVMVEPDEVDFIDVTPMQVVSVAASLIPFLENDDANRALMGSNMQRQAVPLIKTEAPFVGTGVEGVVAKDSGASVLALHDGIVERVDSNRIVIRTLEQKVDGSPSVDIYNLLKFQKSNHNTCINQKPLVKVGHYVKKNDIIADGPSTDNGEIALGRNVLVAFLPWNGYNFEDSILISERIVKEDVFTSIHIEEFEVIARDTRLGPEEITRDIPNVSEEALRHLDEVGIIYVGAEVKAGDILVGKVTPKSESPITPEEKLLRAIFGEKAFDVKDSSLHVPSGVSGTVVEVRIFSRRGVEKDQRAIAIEKQQIEKLAKDRDDELEIIEHFVFSWLEKLLVGHVIINGPKQITAGQTITTEMLKGLSKGQLWQITVEDANVMNEIEQIKIHYDEKKYALDKRFTTKVEKLQSGDDLPQGALKVVKVFIATKHKLQPGDKMAGRHGNKGVISRIVPEEDMPFLEDGTVVDIVLNPLGLPSRMNIGQILETHLGWASINLAKKISTLVKEYKDNHIDIEEIKKFLLELYGKDINYILEGSEEEIISFCNKVSKGVYFATPVFDGAKVQDVKDMLELAGQDLSGQVKLIDGRTGEYFDRLVTVGHKYLLKLHHLVDNKIHSRSIGPYSLVTQQPLGGKSHFGGQRFGEMECWALQAYGAAYTLQEMLTVKSDDVNGRIKTYDSIVRGENNFESGIPESFNVMIKEFRSLCLNVKLEVTPSK</sequence>
<name>RPOB_RICPR</name>
<organism>
    <name type="scientific">Rickettsia prowazekii (strain Madrid E)</name>
    <dbReference type="NCBI Taxonomy" id="272947"/>
    <lineage>
        <taxon>Bacteria</taxon>
        <taxon>Pseudomonadati</taxon>
        <taxon>Pseudomonadota</taxon>
        <taxon>Alphaproteobacteria</taxon>
        <taxon>Rickettsiales</taxon>
        <taxon>Rickettsiaceae</taxon>
        <taxon>Rickettsieae</taxon>
        <taxon>Rickettsia</taxon>
        <taxon>typhus group</taxon>
    </lineage>
</organism>
<feature type="chain" id="PRO_0000047950" description="DNA-directed RNA polymerase subunit beta">
    <location>
        <begin position="1"/>
        <end position="1374"/>
    </location>
</feature>
<feature type="sequence variant" description="In strain: Breinl.">
    <original>S</original>
    <variation>A</variation>
    <location>
        <position position="10"/>
    </location>
</feature>
<feature type="sequence variant" description="In strain: Breinl.">
    <original>H</original>
    <variation>L</variation>
    <location>
        <position position="15"/>
    </location>
</feature>
<feature type="sequence variant" description="In strain: Breinl.">
    <original>I</original>
    <variation>L</variation>
    <location>
        <position position="19"/>
    </location>
</feature>
<feature type="sequence variant" description="In strain: Breinl.">
    <original>D</original>
    <variation>E</variation>
    <location>
        <position position="96"/>
    </location>
</feature>
<feature type="sequence variant" description="In strain: Breinl.">
    <original>R</original>
    <variation>I</variation>
    <location>
        <position position="195"/>
    </location>
</feature>
<feature type="sequence variant" description="In strain: Breinl.">
    <original>K</original>
    <variation>R</variation>
    <location>
        <position position="216"/>
    </location>
</feature>
<feature type="sequence variant" description="In strain: Breinl.">
    <original>K</original>
    <variation>E</variation>
    <location>
        <position position="256"/>
    </location>
</feature>
<feature type="sequence variant" description="In strain: Breinl.">
    <original>D</original>
    <variation>Y</variation>
    <location>
        <position position="273"/>
    </location>
</feature>
<feature type="sequence variant" description="In strain: Breinl.">
    <original>K</original>
    <variation>N</variation>
    <location>
        <position position="282"/>
    </location>
</feature>
<feature type="sequence variant" description="In strain: Breinl.">
    <original>G</original>
    <variation>S</variation>
    <location>
        <position position="299"/>
    </location>
</feature>
<feature type="sequence variant" description="In strain: Breinl.">
    <original>L</original>
    <variation>F</variation>
    <location>
        <position position="310"/>
    </location>
</feature>
<feature type="sequence variant" description="In rifampicin resistant mutant.">
    <original>R</original>
    <variation>K</variation>
    <location>
        <position position="546"/>
    </location>
</feature>